<comment type="function">
    <text evidence="1">Catalyzes the oxidation of 3-carboxy-2-hydroxy-4-methylpentanoate (3-isopropylmalate) to 3-carboxy-4-methyl-2-oxopentanoate. The product decarboxylates to 4-methyl-2 oxopentanoate.</text>
</comment>
<comment type="catalytic activity">
    <reaction evidence="1">
        <text>(2R,3S)-3-isopropylmalate + NAD(+) = 4-methyl-2-oxopentanoate + CO2 + NADH</text>
        <dbReference type="Rhea" id="RHEA:32271"/>
        <dbReference type="ChEBI" id="CHEBI:16526"/>
        <dbReference type="ChEBI" id="CHEBI:17865"/>
        <dbReference type="ChEBI" id="CHEBI:35121"/>
        <dbReference type="ChEBI" id="CHEBI:57540"/>
        <dbReference type="ChEBI" id="CHEBI:57945"/>
        <dbReference type="EC" id="1.1.1.85"/>
    </reaction>
</comment>
<comment type="cofactor">
    <cofactor evidence="1">
        <name>Mg(2+)</name>
        <dbReference type="ChEBI" id="CHEBI:18420"/>
    </cofactor>
    <cofactor evidence="1">
        <name>Mn(2+)</name>
        <dbReference type="ChEBI" id="CHEBI:29035"/>
    </cofactor>
    <text evidence="1">Binds 1 Mg(2+) or Mn(2+) ion per subunit.</text>
</comment>
<comment type="pathway">
    <text evidence="1">Amino-acid biosynthesis; L-leucine biosynthesis; L-leucine from 3-methyl-2-oxobutanoate: step 3/4.</text>
</comment>
<comment type="subunit">
    <text evidence="1">Homodimer.</text>
</comment>
<comment type="subcellular location">
    <subcellularLocation>
        <location evidence="1">Cytoplasm</location>
    </subcellularLocation>
</comment>
<comment type="similarity">
    <text evidence="1">Belongs to the isocitrate and isopropylmalate dehydrogenases family. LeuB type 1 subfamily.</text>
</comment>
<organism>
    <name type="scientific">Chlorobium luteolum (strain DSM 273 / BCRC 81028 / 2530)</name>
    <name type="common">Pelodictyon luteolum</name>
    <dbReference type="NCBI Taxonomy" id="319225"/>
    <lineage>
        <taxon>Bacteria</taxon>
        <taxon>Pseudomonadati</taxon>
        <taxon>Chlorobiota</taxon>
        <taxon>Chlorobiia</taxon>
        <taxon>Chlorobiales</taxon>
        <taxon>Chlorobiaceae</taxon>
        <taxon>Chlorobium/Pelodictyon group</taxon>
        <taxon>Pelodictyon</taxon>
    </lineage>
</organism>
<reference key="1">
    <citation type="submission" date="2005-08" db="EMBL/GenBank/DDBJ databases">
        <title>Complete sequence of Pelodictyon luteolum DSM 273.</title>
        <authorList>
            <consortium name="US DOE Joint Genome Institute"/>
            <person name="Copeland A."/>
            <person name="Lucas S."/>
            <person name="Lapidus A."/>
            <person name="Barry K."/>
            <person name="Detter J.C."/>
            <person name="Glavina T."/>
            <person name="Hammon N."/>
            <person name="Israni S."/>
            <person name="Pitluck S."/>
            <person name="Bryant D."/>
            <person name="Schmutz J."/>
            <person name="Larimer F."/>
            <person name="Land M."/>
            <person name="Kyrpides N."/>
            <person name="Ivanova N."/>
            <person name="Richardson P."/>
        </authorList>
    </citation>
    <scope>NUCLEOTIDE SEQUENCE [LARGE SCALE GENOMIC DNA]</scope>
    <source>
        <strain>DSM 273 / BCRC 81028 / 2530</strain>
    </source>
</reference>
<evidence type="ECO:0000255" key="1">
    <source>
        <dbReference type="HAMAP-Rule" id="MF_01033"/>
    </source>
</evidence>
<dbReference type="EC" id="1.1.1.85" evidence="1"/>
<dbReference type="EMBL" id="CP000096">
    <property type="protein sequence ID" value="ABB23486.1"/>
    <property type="molecule type" value="Genomic_DNA"/>
</dbReference>
<dbReference type="RefSeq" id="WP_011357361.1">
    <property type="nucleotide sequence ID" value="NC_007512.1"/>
</dbReference>
<dbReference type="SMR" id="Q3B595"/>
<dbReference type="STRING" id="319225.Plut_0603"/>
<dbReference type="KEGG" id="plt:Plut_0603"/>
<dbReference type="eggNOG" id="COG0473">
    <property type="taxonomic scope" value="Bacteria"/>
</dbReference>
<dbReference type="HOGENOM" id="CLU_031953_0_3_10"/>
<dbReference type="OrthoDB" id="9806254at2"/>
<dbReference type="UniPathway" id="UPA00048">
    <property type="reaction ID" value="UER00072"/>
</dbReference>
<dbReference type="Proteomes" id="UP000002709">
    <property type="component" value="Chromosome"/>
</dbReference>
<dbReference type="GO" id="GO:0005829">
    <property type="term" value="C:cytosol"/>
    <property type="evidence" value="ECO:0007669"/>
    <property type="project" value="TreeGrafter"/>
</dbReference>
<dbReference type="GO" id="GO:0003862">
    <property type="term" value="F:3-isopropylmalate dehydrogenase activity"/>
    <property type="evidence" value="ECO:0007669"/>
    <property type="project" value="UniProtKB-UniRule"/>
</dbReference>
<dbReference type="GO" id="GO:0000287">
    <property type="term" value="F:magnesium ion binding"/>
    <property type="evidence" value="ECO:0007669"/>
    <property type="project" value="InterPro"/>
</dbReference>
<dbReference type="GO" id="GO:0051287">
    <property type="term" value="F:NAD binding"/>
    <property type="evidence" value="ECO:0007669"/>
    <property type="project" value="InterPro"/>
</dbReference>
<dbReference type="GO" id="GO:0009098">
    <property type="term" value="P:L-leucine biosynthetic process"/>
    <property type="evidence" value="ECO:0007669"/>
    <property type="project" value="UniProtKB-UniRule"/>
</dbReference>
<dbReference type="FunFam" id="3.40.718.10:FF:000006">
    <property type="entry name" value="3-isopropylmalate dehydrogenase"/>
    <property type="match status" value="1"/>
</dbReference>
<dbReference type="Gene3D" id="3.40.718.10">
    <property type="entry name" value="Isopropylmalate Dehydrogenase"/>
    <property type="match status" value="1"/>
</dbReference>
<dbReference type="HAMAP" id="MF_01033">
    <property type="entry name" value="LeuB_type1"/>
    <property type="match status" value="1"/>
</dbReference>
<dbReference type="InterPro" id="IPR019818">
    <property type="entry name" value="IsoCit/isopropylmalate_DH_CS"/>
</dbReference>
<dbReference type="InterPro" id="IPR024084">
    <property type="entry name" value="IsoPropMal-DH-like_dom"/>
</dbReference>
<dbReference type="InterPro" id="IPR004429">
    <property type="entry name" value="Isopropylmalate_DH"/>
</dbReference>
<dbReference type="NCBIfam" id="TIGR00169">
    <property type="entry name" value="leuB"/>
    <property type="match status" value="1"/>
</dbReference>
<dbReference type="PANTHER" id="PTHR42979">
    <property type="entry name" value="3-ISOPROPYLMALATE DEHYDROGENASE"/>
    <property type="match status" value="1"/>
</dbReference>
<dbReference type="PANTHER" id="PTHR42979:SF1">
    <property type="entry name" value="3-ISOPROPYLMALATE DEHYDROGENASE"/>
    <property type="match status" value="1"/>
</dbReference>
<dbReference type="Pfam" id="PF00180">
    <property type="entry name" value="Iso_dh"/>
    <property type="match status" value="1"/>
</dbReference>
<dbReference type="SMART" id="SM01329">
    <property type="entry name" value="Iso_dh"/>
    <property type="match status" value="1"/>
</dbReference>
<dbReference type="SUPFAM" id="SSF53659">
    <property type="entry name" value="Isocitrate/Isopropylmalate dehydrogenase-like"/>
    <property type="match status" value="1"/>
</dbReference>
<dbReference type="PROSITE" id="PS00470">
    <property type="entry name" value="IDH_IMDH"/>
    <property type="match status" value="1"/>
</dbReference>
<name>LEU3_CHLL3</name>
<keyword id="KW-0028">Amino-acid biosynthesis</keyword>
<keyword id="KW-0100">Branched-chain amino acid biosynthesis</keyword>
<keyword id="KW-0963">Cytoplasm</keyword>
<keyword id="KW-0432">Leucine biosynthesis</keyword>
<keyword id="KW-0460">Magnesium</keyword>
<keyword id="KW-0464">Manganese</keyword>
<keyword id="KW-0479">Metal-binding</keyword>
<keyword id="KW-0520">NAD</keyword>
<keyword id="KW-0560">Oxidoreductase</keyword>
<keyword id="KW-1185">Reference proteome</keyword>
<feature type="chain" id="PRO_0000250124" description="3-isopropylmalate dehydrogenase">
    <location>
        <begin position="1"/>
        <end position="353"/>
    </location>
</feature>
<feature type="binding site" evidence="1">
    <location>
        <begin position="75"/>
        <end position="88"/>
    </location>
    <ligand>
        <name>NAD(+)</name>
        <dbReference type="ChEBI" id="CHEBI:57540"/>
    </ligand>
</feature>
<feature type="binding site" evidence="1">
    <location>
        <position position="95"/>
    </location>
    <ligand>
        <name>substrate</name>
    </ligand>
</feature>
<feature type="binding site" evidence="1">
    <location>
        <position position="105"/>
    </location>
    <ligand>
        <name>substrate</name>
    </ligand>
</feature>
<feature type="binding site" evidence="1">
    <location>
        <position position="133"/>
    </location>
    <ligand>
        <name>substrate</name>
    </ligand>
</feature>
<feature type="binding site" evidence="1">
    <location>
        <position position="219"/>
    </location>
    <ligand>
        <name>Mg(2+)</name>
        <dbReference type="ChEBI" id="CHEBI:18420"/>
    </ligand>
</feature>
<feature type="binding site" evidence="1">
    <location>
        <position position="219"/>
    </location>
    <ligand>
        <name>substrate</name>
    </ligand>
</feature>
<feature type="binding site" evidence="1">
    <location>
        <position position="243"/>
    </location>
    <ligand>
        <name>Mg(2+)</name>
        <dbReference type="ChEBI" id="CHEBI:18420"/>
    </ligand>
</feature>
<feature type="binding site" evidence="1">
    <location>
        <position position="247"/>
    </location>
    <ligand>
        <name>Mg(2+)</name>
        <dbReference type="ChEBI" id="CHEBI:18420"/>
    </ligand>
</feature>
<feature type="binding site" evidence="1">
    <location>
        <begin position="276"/>
        <end position="288"/>
    </location>
    <ligand>
        <name>NAD(+)</name>
        <dbReference type="ChEBI" id="CHEBI:57540"/>
    </ligand>
</feature>
<feature type="site" description="Important for catalysis" evidence="1">
    <location>
        <position position="140"/>
    </location>
</feature>
<feature type="site" description="Important for catalysis" evidence="1">
    <location>
        <position position="187"/>
    </location>
</feature>
<protein>
    <recommendedName>
        <fullName evidence="1">3-isopropylmalate dehydrogenase</fullName>
        <ecNumber evidence="1">1.1.1.85</ecNumber>
    </recommendedName>
    <alternativeName>
        <fullName evidence="1">3-IPM-DH</fullName>
    </alternativeName>
    <alternativeName>
        <fullName evidence="1">Beta-IPM dehydrogenase</fullName>
        <shortName evidence="1">IMDH</shortName>
    </alternativeName>
</protein>
<gene>
    <name evidence="1" type="primary">leuB</name>
    <name type="ordered locus">Plut_0603</name>
</gene>
<proteinExistence type="inferred from homology"/>
<accession>Q3B595</accession>
<sequence>MYKIVSIPGDGIGPEVVAGALAVIRQITKKHGFEIQVEEHPFGGASYDLHGSMLTDETLNACRDCDAVLLGAVGGPKWENLPHEHKPEAALLKIRRELGLFANLRPAKVYDALVDASSLKADVVRGTDFMVFRELTGGIYFGEPRGFDEKRGWNTMVYEKHEVERIARLAFEAAQKRGSKRVMSIDKANVLEVSQFWRNEVHRVHRDFPDVELSDMYVDNAAMQIVRNPKQFDVIVTGNLFGDILSDIAGMITGSLGMLPSASIGRVHALYEPIHGSAPDIAGKNIANPIATIASVAMMFEHSFCMADISNEIHAAIEGALSEGLRTADIAAPGQKSVSTTEMTEGIIRHLGA</sequence>